<dbReference type="EMBL" id="AB017375">
    <property type="protein sequence ID" value="BAA36791.1"/>
    <property type="molecule type" value="Genomic_DNA"/>
</dbReference>
<dbReference type="GO" id="GO:0009507">
    <property type="term" value="C:chloroplast"/>
    <property type="evidence" value="ECO:0007669"/>
    <property type="project" value="UniProtKB-SubCell"/>
</dbReference>
<dbReference type="GO" id="GO:0003723">
    <property type="term" value="F:RNA binding"/>
    <property type="evidence" value="ECO:0007669"/>
    <property type="project" value="UniProtKB-KW"/>
</dbReference>
<dbReference type="GO" id="GO:0006397">
    <property type="term" value="P:mRNA processing"/>
    <property type="evidence" value="ECO:0007669"/>
    <property type="project" value="UniProtKB-KW"/>
</dbReference>
<dbReference type="GO" id="GO:0008380">
    <property type="term" value="P:RNA splicing"/>
    <property type="evidence" value="ECO:0007669"/>
    <property type="project" value="UniProtKB-UniRule"/>
</dbReference>
<dbReference type="GO" id="GO:0008033">
    <property type="term" value="P:tRNA processing"/>
    <property type="evidence" value="ECO:0007669"/>
    <property type="project" value="UniProtKB-KW"/>
</dbReference>
<dbReference type="HAMAP" id="MF_01390">
    <property type="entry name" value="MatK"/>
    <property type="match status" value="1"/>
</dbReference>
<dbReference type="InterPro" id="IPR024937">
    <property type="entry name" value="Domain_X"/>
</dbReference>
<dbReference type="InterPro" id="IPR002866">
    <property type="entry name" value="Maturase_MatK"/>
</dbReference>
<dbReference type="InterPro" id="IPR024942">
    <property type="entry name" value="Maturase_MatK_N"/>
</dbReference>
<dbReference type="PANTHER" id="PTHR34811">
    <property type="entry name" value="MATURASE K"/>
    <property type="match status" value="1"/>
</dbReference>
<dbReference type="PANTHER" id="PTHR34811:SF1">
    <property type="entry name" value="MATURASE K"/>
    <property type="match status" value="1"/>
</dbReference>
<dbReference type="Pfam" id="PF01348">
    <property type="entry name" value="Intron_maturas2"/>
    <property type="match status" value="1"/>
</dbReference>
<dbReference type="Pfam" id="PF01824">
    <property type="entry name" value="MatK_N"/>
    <property type="match status" value="1"/>
</dbReference>
<geneLocation type="chloroplast"/>
<comment type="function">
    <text evidence="1">Usually encoded in the trnK tRNA gene intron. Probably assists in splicing its own and other chloroplast group II introns.</text>
</comment>
<comment type="subcellular location">
    <subcellularLocation>
        <location>Plastid</location>
        <location>Chloroplast</location>
    </subcellularLocation>
</comment>
<comment type="similarity">
    <text evidence="1">Belongs to the intron maturase 2 family. MatK subfamily.</text>
</comment>
<sequence>MEELQGYLEKDRSRQQHFLYPLLFQEYIYTLAYDHGLNGSIFYEPMEILSYDNKSSSVLVKHLITRMYQQNYLIYSINDSSQNRFVGHNNYFYSHFYSQMVSEGFAVIAEIPFSMRLVPSFEEKEIPKSQNLRSIHSIFPFLEDKLSHLNYVLDILIPYPIHLEILVQILQCRIQDVPSLHLLRLFLHEYHNWRSFITSNKSIYVFSKENKRLFRLLYNSYVSEYEFLFIYIRKQSYNLRPTSSRAFLERIHFYVKIEHFIIVCHNYFQKTLRFFKDSFMHYIRYQGKAILASRGTYLLIKKWKCYLVNFWQYYLYFWSKPYRIHINQLSNYSFYFMGYISSVLINPSAVKNQMLENLFLVDTVTKKFDTIVPVIPLIGSLSKAKFCTVAGHPISKPVWADLSDSDIIERFGRICRNLSHYHSGSSKKQSLYRIKYILRLSCARTLARKHKSTVRNLLQRLDSGLLEEFFTEEEQVICLILPKTTLFTLHGSHGERIWYLDIIRIDDLANSLDWS</sequence>
<reference key="1">
    <citation type="journal article" date="1999" name="J. Plant Res.">
        <title>Molecular systematics of Trilliaceae I. Phylogenetic analyses of Trillium using matK gene sequences.</title>
        <authorList>
            <person name="Kazempour Osaloo S."/>
            <person name="Utech F.H."/>
            <person name="Ohara M."/>
            <person name="Kawano S."/>
        </authorList>
    </citation>
    <scope>NUCLEOTIDE SEQUENCE [GENOMIC DNA]</scope>
    <source>
        <tissue>Leaf</tissue>
    </source>
</reference>
<name>MATK_HELBU</name>
<evidence type="ECO:0000255" key="1">
    <source>
        <dbReference type="HAMAP-Rule" id="MF_01390"/>
    </source>
</evidence>
<proteinExistence type="inferred from homology"/>
<accession>Q9XPN6</accession>
<organism>
    <name type="scientific">Helonias bullata</name>
    <name type="common">Swamp pink</name>
    <dbReference type="NCBI Taxonomy" id="50364"/>
    <lineage>
        <taxon>Eukaryota</taxon>
        <taxon>Viridiplantae</taxon>
        <taxon>Streptophyta</taxon>
        <taxon>Embryophyta</taxon>
        <taxon>Tracheophyta</taxon>
        <taxon>Spermatophyta</taxon>
        <taxon>Magnoliopsida</taxon>
        <taxon>Liliopsida</taxon>
        <taxon>Liliales</taxon>
        <taxon>Melanthiaceae</taxon>
        <taxon>Helonias</taxon>
    </lineage>
</organism>
<keyword id="KW-0150">Chloroplast</keyword>
<keyword id="KW-0507">mRNA processing</keyword>
<keyword id="KW-0934">Plastid</keyword>
<keyword id="KW-0694">RNA-binding</keyword>
<keyword id="KW-0819">tRNA processing</keyword>
<gene>
    <name evidence="1" type="primary">matK</name>
</gene>
<protein>
    <recommendedName>
        <fullName evidence="1">Maturase K</fullName>
    </recommendedName>
    <alternativeName>
        <fullName evidence="1">Intron maturase</fullName>
    </alternativeName>
</protein>
<feature type="chain" id="PRO_0000143418" description="Maturase K">
    <location>
        <begin position="1"/>
        <end position="515"/>
    </location>
</feature>